<organism>
    <name type="scientific">Thermococcus litoralis</name>
    <dbReference type="NCBI Taxonomy" id="2265"/>
    <lineage>
        <taxon>Archaea</taxon>
        <taxon>Methanobacteriati</taxon>
        <taxon>Methanobacteriota</taxon>
        <taxon>Thermococci</taxon>
        <taxon>Thermococcales</taxon>
        <taxon>Thermococcaceae</taxon>
        <taxon>Thermococcus</taxon>
    </lineage>
</organism>
<reference key="1">
    <citation type="journal article" date="1992" name="Biochemistry">
        <title>Proton NMR investigation of the oxidized three-iron clusters in the ferredoxins from the hyperthermophilic archae Pyrococcus furiosus and Thermococcus litoralis.</title>
        <authorList>
            <person name="Busse S.C."/>
            <person name="la Mar G.N."/>
            <person name="Yu L.P."/>
            <person name="Howard J.B."/>
            <person name="Smith E.T."/>
            <person name="Zhou Z.H."/>
            <person name="Adams M.W.W."/>
        </authorList>
    </citation>
    <scope>STRUCTURE BY NMR</scope>
</reference>
<reference key="2">
    <citation type="journal article" date="1996" name="Biochemistry">
        <title>Molecular model of the solution structure for the paramagnetic four-iron ferredoxin from the hyperthermophilic archaeon Thermococcus litoralis.</title>
        <authorList>
            <person name="Wang P.-L."/>
            <person name="Donaire A."/>
            <person name="Zhou Z.H."/>
            <person name="Adams M.W.W."/>
            <person name="la Mar G.N."/>
        </authorList>
    </citation>
    <scope>STRUCTURE BY NMR</scope>
</reference>
<dbReference type="PIR" id="B44203">
    <property type="entry name" value="B44203"/>
</dbReference>
<dbReference type="RefSeq" id="WP_004067745.1">
    <property type="nucleotide sequence ID" value="NZ_FJMQ01000026.1"/>
</dbReference>
<dbReference type="SMR" id="P29604"/>
<dbReference type="GeneID" id="16549217"/>
<dbReference type="OMA" id="VCPDVFE"/>
<dbReference type="GO" id="GO:0051538">
    <property type="term" value="F:3 iron, 4 sulfur cluster binding"/>
    <property type="evidence" value="ECO:0007669"/>
    <property type="project" value="UniProtKB-KW"/>
</dbReference>
<dbReference type="GO" id="GO:0051539">
    <property type="term" value="F:4 iron, 4 sulfur cluster binding"/>
    <property type="evidence" value="ECO:0007669"/>
    <property type="project" value="UniProtKB-KW"/>
</dbReference>
<dbReference type="GO" id="GO:0009055">
    <property type="term" value="F:electron transfer activity"/>
    <property type="evidence" value="ECO:0007669"/>
    <property type="project" value="InterPro"/>
</dbReference>
<dbReference type="GO" id="GO:0005506">
    <property type="term" value="F:iron ion binding"/>
    <property type="evidence" value="ECO:0007669"/>
    <property type="project" value="InterPro"/>
</dbReference>
<dbReference type="GO" id="GO:0016491">
    <property type="term" value="F:oxidoreductase activity"/>
    <property type="evidence" value="ECO:0007669"/>
    <property type="project" value="UniProtKB-ARBA"/>
</dbReference>
<dbReference type="Gene3D" id="3.30.70.20">
    <property type="match status" value="1"/>
</dbReference>
<dbReference type="InterPro" id="IPR001080">
    <property type="entry name" value="3Fe4S_ferredoxin"/>
</dbReference>
<dbReference type="InterPro" id="IPR017896">
    <property type="entry name" value="4Fe4S_Fe-S-bd"/>
</dbReference>
<dbReference type="InterPro" id="IPR017900">
    <property type="entry name" value="4Fe4S_Fe_S_CS"/>
</dbReference>
<dbReference type="InterPro" id="IPR051269">
    <property type="entry name" value="Fe-S_cluster_ET"/>
</dbReference>
<dbReference type="PANTHER" id="PTHR36923">
    <property type="entry name" value="FERREDOXIN"/>
    <property type="match status" value="1"/>
</dbReference>
<dbReference type="PANTHER" id="PTHR36923:SF3">
    <property type="entry name" value="FERREDOXIN"/>
    <property type="match status" value="1"/>
</dbReference>
<dbReference type="Pfam" id="PF13459">
    <property type="entry name" value="Fer4_15"/>
    <property type="match status" value="1"/>
</dbReference>
<dbReference type="PRINTS" id="PR00352">
    <property type="entry name" value="3FE4SFRDOXIN"/>
</dbReference>
<dbReference type="SUPFAM" id="SSF54862">
    <property type="entry name" value="4Fe-4S ferredoxins"/>
    <property type="match status" value="1"/>
</dbReference>
<dbReference type="PROSITE" id="PS00198">
    <property type="entry name" value="4FE4S_FER_1"/>
    <property type="match status" value="1"/>
</dbReference>
<dbReference type="PROSITE" id="PS51379">
    <property type="entry name" value="4FE4S_FER_2"/>
    <property type="match status" value="1"/>
</dbReference>
<comment type="function">
    <text>Ferredoxins are iron-sulfur proteins that transfer electrons in a wide variety of metabolic reactions.</text>
</comment>
<comment type="cofactor">
    <cofactor>
        <name>[4Fe-4S] cluster</name>
        <dbReference type="ChEBI" id="CHEBI:49883"/>
    </cofactor>
    <cofactor>
        <name>[3Fe-4S] cluster</name>
        <dbReference type="ChEBI" id="CHEBI:21137"/>
    </cofactor>
    <text>Binds 1 [4Fe-4S] cluster which readily converts to a stable [3Fe-4S] form.</text>
</comment>
<proteinExistence type="evidence at protein level"/>
<keyword id="KW-0003">3Fe-4S</keyword>
<keyword id="KW-0004">4Fe-4S</keyword>
<keyword id="KW-1015">Disulfide bond</keyword>
<keyword id="KW-0249">Electron transport</keyword>
<keyword id="KW-0408">Iron</keyword>
<keyword id="KW-0411">Iron-sulfur</keyword>
<keyword id="KW-0479">Metal-binding</keyword>
<keyword id="KW-0813">Transport</keyword>
<evidence type="ECO:0000255" key="1">
    <source>
        <dbReference type="PROSITE-ProRule" id="PRU00711"/>
    </source>
</evidence>
<accession>P29604</accession>
<sequence>MKVSVDKDACIGCGVCASICPDVFEMDDDGKAKALVAETDLECAKEAAESCPTGAITVE</sequence>
<feature type="chain" id="PRO_0000159202" description="Ferredoxin">
    <location>
        <begin position="1"/>
        <end position="59"/>
    </location>
</feature>
<feature type="domain" description="4Fe-4S ferredoxin-type" evidence="1">
    <location>
        <begin position="2"/>
        <end position="29"/>
    </location>
</feature>
<feature type="binding site">
    <location>
        <position position="10"/>
    </location>
    <ligand>
        <name>[4Fe-4S] cluster</name>
        <dbReference type="ChEBI" id="CHEBI:49883"/>
    </ligand>
</feature>
<feature type="binding site">
    <location>
        <position position="13"/>
    </location>
    <ligand>
        <name>[4Fe-4S] cluster</name>
        <dbReference type="ChEBI" id="CHEBI:49883"/>
    </ligand>
</feature>
<feature type="binding site">
    <location>
        <position position="16"/>
    </location>
    <ligand>
        <name>[4Fe-4S] cluster</name>
        <dbReference type="ChEBI" id="CHEBI:49883"/>
    </ligand>
</feature>
<feature type="binding site">
    <location>
        <position position="51"/>
    </location>
    <ligand>
        <name>[4Fe-4S] cluster</name>
        <dbReference type="ChEBI" id="CHEBI:49883"/>
    </ligand>
</feature>
<feature type="disulfide bond">
    <location>
        <begin position="20"/>
        <end position="43"/>
    </location>
</feature>
<name>FER_THELI</name>
<protein>
    <recommendedName>
        <fullName>Ferredoxin</fullName>
    </recommendedName>
</protein>